<proteinExistence type="inferred from homology"/>
<protein>
    <recommendedName>
        <fullName>Lipase</fullName>
        <ecNumber>3.1.1.3</ecNumber>
    </recommendedName>
    <alternativeName>
        <fullName>Glycerol ester hydrolase</fullName>
    </alternativeName>
</protein>
<organism>
    <name type="scientific">Staphylococcus epidermidis (strain ATCC 35984 / DSM 28319 / BCRC 17069 / CCUG 31568 / BM 3577 / RP62A)</name>
    <dbReference type="NCBI Taxonomy" id="176279"/>
    <lineage>
        <taxon>Bacteria</taxon>
        <taxon>Bacillati</taxon>
        <taxon>Bacillota</taxon>
        <taxon>Bacilli</taxon>
        <taxon>Bacillales</taxon>
        <taxon>Staphylococcaceae</taxon>
        <taxon>Staphylococcus</taxon>
    </lineage>
</organism>
<keyword id="KW-0106">Calcium</keyword>
<keyword id="KW-0378">Hydrolase</keyword>
<keyword id="KW-0442">Lipid degradation</keyword>
<keyword id="KW-0443">Lipid metabolism</keyword>
<keyword id="KW-0479">Metal-binding</keyword>
<keyword id="KW-1185">Reference proteome</keyword>
<keyword id="KW-0964">Secreted</keyword>
<keyword id="KW-0732">Signal</keyword>
<keyword id="KW-0865">Zymogen</keyword>
<evidence type="ECO:0000250" key="1"/>
<evidence type="ECO:0000255" key="2"/>
<evidence type="ECO:0000255" key="3">
    <source>
        <dbReference type="PROSITE-ProRule" id="PRU10037"/>
    </source>
</evidence>
<evidence type="ECO:0000256" key="4">
    <source>
        <dbReference type="SAM" id="MobiDB-lite"/>
    </source>
</evidence>
<evidence type="ECO:0000305" key="5"/>
<feature type="signal peptide" evidence="2">
    <location>
        <begin position="1"/>
        <end position="35"/>
    </location>
</feature>
<feature type="propeptide" id="PRO_0000045196" description="Removed in mature form" evidence="1">
    <location>
        <begin position="36"/>
        <end position="302"/>
    </location>
</feature>
<feature type="chain" id="PRO_0000045197" description="Lipase">
    <location>
        <begin position="303"/>
        <end position="688"/>
    </location>
</feature>
<feature type="region of interest" description="Disordered" evidence="4">
    <location>
        <begin position="31"/>
        <end position="309"/>
    </location>
</feature>
<feature type="compositionally biased region" description="Polar residues" evidence="4">
    <location>
        <begin position="45"/>
        <end position="54"/>
    </location>
</feature>
<feature type="compositionally biased region" description="Basic and acidic residues" evidence="4">
    <location>
        <begin position="84"/>
        <end position="95"/>
    </location>
</feature>
<feature type="compositionally biased region" description="Basic and acidic residues" evidence="4">
    <location>
        <begin position="103"/>
        <end position="143"/>
    </location>
</feature>
<feature type="compositionally biased region" description="Polar residues" evidence="4">
    <location>
        <begin position="144"/>
        <end position="175"/>
    </location>
</feature>
<feature type="compositionally biased region" description="Polar residues" evidence="4">
    <location>
        <begin position="184"/>
        <end position="211"/>
    </location>
</feature>
<feature type="compositionally biased region" description="Basic and acidic residues" evidence="4">
    <location>
        <begin position="227"/>
        <end position="268"/>
    </location>
</feature>
<feature type="compositionally biased region" description="Polar residues" evidence="4">
    <location>
        <begin position="274"/>
        <end position="289"/>
    </location>
</feature>
<feature type="active site" description="Nucleophile" evidence="1">
    <location>
        <position position="418"/>
    </location>
</feature>
<feature type="active site" description="Charge relay system" evidence="3">
    <location>
        <position position="609"/>
    </location>
</feature>
<feature type="active site" description="Charge relay system" evidence="3">
    <location>
        <position position="648"/>
    </location>
</feature>
<feature type="binding site" evidence="1">
    <location>
        <position position="647"/>
    </location>
    <ligand>
        <name>Ca(2+)</name>
        <dbReference type="ChEBI" id="CHEBI:29108"/>
    </ligand>
</feature>
<feature type="binding site" evidence="1">
    <location>
        <position position="650"/>
    </location>
    <ligand>
        <name>Ca(2+)</name>
        <dbReference type="ChEBI" id="CHEBI:29108"/>
    </ligand>
</feature>
<feature type="binding site" evidence="1">
    <location>
        <position position="655"/>
    </location>
    <ligand>
        <name>Ca(2+)</name>
        <dbReference type="ChEBI" id="CHEBI:29108"/>
    </ligand>
</feature>
<feature type="binding site" evidence="1">
    <location>
        <position position="658"/>
    </location>
    <ligand>
        <name>Ca(2+)</name>
        <dbReference type="ChEBI" id="CHEBI:29108"/>
    </ligand>
</feature>
<accession>Q5HKP6</accession>
<reference key="1">
    <citation type="journal article" date="2005" name="J. Bacteriol.">
        <title>Insights on evolution of virulence and resistance from the complete genome analysis of an early methicillin-resistant Staphylococcus aureus strain and a biofilm-producing methicillin-resistant Staphylococcus epidermidis strain.</title>
        <authorList>
            <person name="Gill S.R."/>
            <person name="Fouts D.E."/>
            <person name="Archer G.L."/>
            <person name="Mongodin E.F."/>
            <person name="DeBoy R.T."/>
            <person name="Ravel J."/>
            <person name="Paulsen I.T."/>
            <person name="Kolonay J.F."/>
            <person name="Brinkac L.M."/>
            <person name="Beanan M.J."/>
            <person name="Dodson R.J."/>
            <person name="Daugherty S.C."/>
            <person name="Madupu R."/>
            <person name="Angiuoli S.V."/>
            <person name="Durkin A.S."/>
            <person name="Haft D.H."/>
            <person name="Vamathevan J.J."/>
            <person name="Khouri H."/>
            <person name="Utterback T.R."/>
            <person name="Lee C."/>
            <person name="Dimitrov G."/>
            <person name="Jiang L."/>
            <person name="Qin H."/>
            <person name="Weidman J."/>
            <person name="Tran K."/>
            <person name="Kang K.H."/>
            <person name="Hance I.R."/>
            <person name="Nelson K.E."/>
            <person name="Fraser C.M."/>
        </authorList>
    </citation>
    <scope>NUCLEOTIDE SEQUENCE [LARGE SCALE GENOMIC DNA]</scope>
    <source>
        <strain>ATCC 35984 / DSM 28319 / BCRC 17069 / CCUG 31568 / BM 3577 / RP62A</strain>
    </source>
</reference>
<name>LIP_STAEQ</name>
<gene>
    <name type="primary">lip</name>
    <name type="ordered locus">SERP2297</name>
</gene>
<dbReference type="EC" id="3.1.1.3"/>
<dbReference type="EMBL" id="CP000029">
    <property type="protein sequence ID" value="AAW53186.1"/>
    <property type="molecule type" value="Genomic_DNA"/>
</dbReference>
<dbReference type="SMR" id="Q5HKP6"/>
<dbReference type="STRING" id="176279.SERP2297"/>
<dbReference type="ESTHER" id="staep-lipas">
    <property type="family name" value="Bacterial_lip_FamI.6"/>
</dbReference>
<dbReference type="KEGG" id="ser:SERP2297"/>
<dbReference type="eggNOG" id="COG1075">
    <property type="taxonomic scope" value="Bacteria"/>
</dbReference>
<dbReference type="HOGENOM" id="CLU_023555_2_1_9"/>
<dbReference type="Proteomes" id="UP000000531">
    <property type="component" value="Chromosome"/>
</dbReference>
<dbReference type="GO" id="GO:0005576">
    <property type="term" value="C:extracellular region"/>
    <property type="evidence" value="ECO:0007669"/>
    <property type="project" value="UniProtKB-SubCell"/>
</dbReference>
<dbReference type="GO" id="GO:0046872">
    <property type="term" value="F:metal ion binding"/>
    <property type="evidence" value="ECO:0007669"/>
    <property type="project" value="UniProtKB-KW"/>
</dbReference>
<dbReference type="GO" id="GO:0004806">
    <property type="term" value="F:triacylglycerol lipase activity"/>
    <property type="evidence" value="ECO:0007669"/>
    <property type="project" value="UniProtKB-EC"/>
</dbReference>
<dbReference type="GO" id="GO:0016042">
    <property type="term" value="P:lipid catabolic process"/>
    <property type="evidence" value="ECO:0007669"/>
    <property type="project" value="UniProtKB-KW"/>
</dbReference>
<dbReference type="Gene3D" id="3.40.50.1820">
    <property type="entry name" value="alpha/beta hydrolase"/>
    <property type="match status" value="1"/>
</dbReference>
<dbReference type="InterPro" id="IPR029058">
    <property type="entry name" value="AB_hydrolase_fold"/>
</dbReference>
<dbReference type="InterPro" id="IPR056304">
    <property type="entry name" value="Lip-like_C"/>
</dbReference>
<dbReference type="InterPro" id="IPR005877">
    <property type="entry name" value="YSIRK_signal_dom"/>
</dbReference>
<dbReference type="NCBIfam" id="NF047351">
    <property type="entry name" value="lipase_YSIRK_Sa"/>
    <property type="match status" value="1"/>
</dbReference>
<dbReference type="NCBIfam" id="TIGR01168">
    <property type="entry name" value="YSIRK_signal"/>
    <property type="match status" value="1"/>
</dbReference>
<dbReference type="PANTHER" id="PTHR34043">
    <property type="entry name" value="ALPHA/BETA-HYDROLASES SUPERFAMILY PROTEIN"/>
    <property type="match status" value="1"/>
</dbReference>
<dbReference type="PANTHER" id="PTHR34043:SF3">
    <property type="entry name" value="ALPHA_BETA-HYDROLASES SUPERFAMILY PROTEIN"/>
    <property type="match status" value="1"/>
</dbReference>
<dbReference type="Pfam" id="PF24708">
    <property type="entry name" value="Lip_C"/>
    <property type="match status" value="1"/>
</dbReference>
<dbReference type="Pfam" id="PF04650">
    <property type="entry name" value="YSIRK_signal"/>
    <property type="match status" value="1"/>
</dbReference>
<dbReference type="SUPFAM" id="SSF53474">
    <property type="entry name" value="alpha/beta-Hydrolases"/>
    <property type="match status" value="1"/>
</dbReference>
<dbReference type="PROSITE" id="PS00120">
    <property type="entry name" value="LIPASE_SER"/>
    <property type="match status" value="1"/>
</dbReference>
<comment type="catalytic activity">
    <reaction>
        <text>a triacylglycerol + H2O = a diacylglycerol + a fatty acid + H(+)</text>
        <dbReference type="Rhea" id="RHEA:12044"/>
        <dbReference type="ChEBI" id="CHEBI:15377"/>
        <dbReference type="ChEBI" id="CHEBI:15378"/>
        <dbReference type="ChEBI" id="CHEBI:17855"/>
        <dbReference type="ChEBI" id="CHEBI:18035"/>
        <dbReference type="ChEBI" id="CHEBI:28868"/>
        <dbReference type="EC" id="3.1.1.3"/>
    </reaction>
</comment>
<comment type="subcellular location">
    <subcellularLocation>
        <location evidence="1">Secreted</location>
    </subcellularLocation>
</comment>
<comment type="similarity">
    <text evidence="5">Belongs to the AB hydrolase superfamily. Lipase family.</text>
</comment>
<sequence length="688" mass="77410">MKTRQNKYSIRKFSVGASSILIAALLFMGGGSAQAAEQQQDKGTVENSTTQSIGDENEKLSEQQSTQNKNVNEKSNVDSITENESLHNETPKNEDLIQQQKDSQNDNKSESVVEQNKENEAFVKKHSEEKPQQEQVELEKHASENNQTLHSKAAQSNEDVKTKPSQLDNTTAQQEDSQKENLSKQDTQSSKTTDLLRATGQNQSKDSQSTEEVNKEVKNDTQQVTAKNDDDKVETFNLNSKEEPLKVDKQANPTTDKDKSSKNDKGSHDGLANLESNAVATTNKQSKQQVSEKNEDQTNKSAKQKQYKNNDPIILVHGFNGFTDDINPSVLTHYWGGDKMNIRQDLEENGYEAYEASISAFGSNYDRAVELYYYIKGGRVDYGAAHAAKYGHERYGKTYEGVYKDWKPGQKIHLVGHSMGGQTIRQLEELLRHGNPEEVEYQKQHGGEISPLFQGGHDNMVSSITTLGTPHNGTHASDLLGNEAIVRQLAYDVGKMYGNKDSRVDFGLEHWGLKQKPNESYIQYVKRVQNSKLWKSKDSGLHDLTRDGATDLNRKTSLNPNIVYKTYTGESTHKTLAGKQKADLNMFLPFTITGNLIGKAKEKEWRENDGLVSVISSQHPFNQKYVEATDKNQKGVWQVTPTKHDWDHVDFVGQDSTDTKRTRDELQQFWHGLADDLVQSEQLTSTNK</sequence>